<reference key="1">
    <citation type="journal article" date="2004" name="Nat. Biotechnol.">
        <title>The genome sequence of the anaerobic, sulfate-reducing bacterium Desulfovibrio vulgaris Hildenborough.</title>
        <authorList>
            <person name="Heidelberg J.F."/>
            <person name="Seshadri R."/>
            <person name="Haveman S.A."/>
            <person name="Hemme C.L."/>
            <person name="Paulsen I.T."/>
            <person name="Kolonay J.F."/>
            <person name="Eisen J.A."/>
            <person name="Ward N.L."/>
            <person name="Methe B.A."/>
            <person name="Brinkac L.M."/>
            <person name="Daugherty S.C."/>
            <person name="DeBoy R.T."/>
            <person name="Dodson R.J."/>
            <person name="Durkin A.S."/>
            <person name="Madupu R."/>
            <person name="Nelson W.C."/>
            <person name="Sullivan S.A."/>
            <person name="Fouts D.E."/>
            <person name="Haft D.H."/>
            <person name="Selengut J."/>
            <person name="Peterson J.D."/>
            <person name="Davidsen T.M."/>
            <person name="Zafar N."/>
            <person name="Zhou L."/>
            <person name="Radune D."/>
            <person name="Dimitrov G."/>
            <person name="Hance M."/>
            <person name="Tran K."/>
            <person name="Khouri H.M."/>
            <person name="Gill J."/>
            <person name="Utterback T.R."/>
            <person name="Feldblyum T.V."/>
            <person name="Wall J.D."/>
            <person name="Voordouw G."/>
            <person name="Fraser C.M."/>
        </authorList>
    </citation>
    <scope>NUCLEOTIDE SEQUENCE [LARGE SCALE GENOMIC DNA]</scope>
    <source>
        <strain>ATCC 29579 / DSM 644 / CCUG 34227 / NCIMB 8303 / VKM B-1760 / Hildenborough</strain>
    </source>
</reference>
<name>CLPS_NITV2</name>
<protein>
    <recommendedName>
        <fullName evidence="1">ATP-dependent Clp protease adapter protein ClpS</fullName>
    </recommendedName>
</protein>
<organism>
    <name type="scientific">Nitratidesulfovibrio vulgaris (strain ATCC 29579 / DSM 644 / CCUG 34227 / NCIMB 8303 / VKM B-1760 / Hildenborough)</name>
    <name type="common">Desulfovibrio vulgaris</name>
    <dbReference type="NCBI Taxonomy" id="882"/>
    <lineage>
        <taxon>Bacteria</taxon>
        <taxon>Pseudomonadati</taxon>
        <taxon>Thermodesulfobacteriota</taxon>
        <taxon>Desulfovibrionia</taxon>
        <taxon>Desulfovibrionales</taxon>
        <taxon>Desulfovibrionaceae</taxon>
        <taxon>Nitratidesulfovibrio</taxon>
    </lineage>
</organism>
<accession>Q72BN4</accession>
<evidence type="ECO:0000255" key="1">
    <source>
        <dbReference type="HAMAP-Rule" id="MF_00302"/>
    </source>
</evidence>
<keyword id="KW-1185">Reference proteome</keyword>
<gene>
    <name evidence="1" type="primary">clpS</name>
    <name type="ordered locus">DVU_1601</name>
</gene>
<feature type="chain" id="PRO_0000215706" description="ATP-dependent Clp protease adapter protein ClpS">
    <location>
        <begin position="1"/>
        <end position="104"/>
    </location>
</feature>
<sequence>MSNGPLAPGYDSDILVEDDVRLPRMYRVLLHNDDYTTMEFVVSILVEVFRKTAEQATAIMLAVHRDGVGECGVYTFEVAETKAAIVHARARREGYPLRCSTEEV</sequence>
<dbReference type="EMBL" id="AE017285">
    <property type="protein sequence ID" value="AAS96079.1"/>
    <property type="molecule type" value="Genomic_DNA"/>
</dbReference>
<dbReference type="RefSeq" id="WP_010938892.1">
    <property type="nucleotide sequence ID" value="NC_002937.3"/>
</dbReference>
<dbReference type="RefSeq" id="YP_010820.1">
    <property type="nucleotide sequence ID" value="NC_002937.3"/>
</dbReference>
<dbReference type="SMR" id="Q72BN4"/>
<dbReference type="STRING" id="882.DVU_1601"/>
<dbReference type="PaxDb" id="882-DVU_1601"/>
<dbReference type="EnsemblBacteria" id="AAS96079">
    <property type="protein sequence ID" value="AAS96079"/>
    <property type="gene ID" value="DVU_1601"/>
</dbReference>
<dbReference type="KEGG" id="dvu:DVU_1601"/>
<dbReference type="PATRIC" id="fig|882.5.peg.1476"/>
<dbReference type="eggNOG" id="COG2127">
    <property type="taxonomic scope" value="Bacteria"/>
</dbReference>
<dbReference type="HOGENOM" id="CLU_134358_1_0_7"/>
<dbReference type="OrthoDB" id="9796121at2"/>
<dbReference type="PhylomeDB" id="Q72BN4"/>
<dbReference type="Proteomes" id="UP000002194">
    <property type="component" value="Chromosome"/>
</dbReference>
<dbReference type="GO" id="GO:0030163">
    <property type="term" value="P:protein catabolic process"/>
    <property type="evidence" value="ECO:0007669"/>
    <property type="project" value="InterPro"/>
</dbReference>
<dbReference type="GO" id="GO:0006508">
    <property type="term" value="P:proteolysis"/>
    <property type="evidence" value="ECO:0007669"/>
    <property type="project" value="UniProtKB-UniRule"/>
</dbReference>
<dbReference type="FunFam" id="3.30.1390.10:FF:000002">
    <property type="entry name" value="ATP-dependent Clp protease adapter protein ClpS"/>
    <property type="match status" value="1"/>
</dbReference>
<dbReference type="Gene3D" id="3.30.1390.10">
    <property type="match status" value="1"/>
</dbReference>
<dbReference type="HAMAP" id="MF_00302">
    <property type="entry name" value="ClpS"/>
    <property type="match status" value="1"/>
</dbReference>
<dbReference type="InterPro" id="IPR022935">
    <property type="entry name" value="ClpS"/>
</dbReference>
<dbReference type="InterPro" id="IPR003769">
    <property type="entry name" value="ClpS_core"/>
</dbReference>
<dbReference type="InterPro" id="IPR014719">
    <property type="entry name" value="Ribosomal_bL12_C/ClpS-like"/>
</dbReference>
<dbReference type="PANTHER" id="PTHR33473:SF19">
    <property type="entry name" value="ATP-DEPENDENT CLP PROTEASE ADAPTER PROTEIN CLPS"/>
    <property type="match status" value="1"/>
</dbReference>
<dbReference type="PANTHER" id="PTHR33473">
    <property type="entry name" value="ATP-DEPENDENT CLP PROTEASE ADAPTER PROTEIN CLPS1, CHLOROPLASTIC"/>
    <property type="match status" value="1"/>
</dbReference>
<dbReference type="Pfam" id="PF02617">
    <property type="entry name" value="ClpS"/>
    <property type="match status" value="1"/>
</dbReference>
<dbReference type="SUPFAM" id="SSF54736">
    <property type="entry name" value="ClpS-like"/>
    <property type="match status" value="1"/>
</dbReference>
<proteinExistence type="inferred from homology"/>
<comment type="function">
    <text evidence="1">Involved in the modulation of the specificity of the ClpAP-mediated ATP-dependent protein degradation.</text>
</comment>
<comment type="subunit">
    <text evidence="1">Binds to the N-terminal domain of the chaperone ClpA.</text>
</comment>
<comment type="similarity">
    <text evidence="1">Belongs to the ClpS family.</text>
</comment>